<reference key="1">
    <citation type="journal article" date="2000" name="J. Bacteriol.">
        <title>Characterization of tpp1(+) as encoding a main trehalose-6P phosphatase in the fission yeast Schizosaccharomyces pombe.</title>
        <authorList>
            <person name="Franco A."/>
            <person name="Soto T."/>
            <person name="Vicente-Soler J."/>
            <person name="Guillen P.V."/>
            <person name="Cansado J."/>
            <person name="Gacto M."/>
        </authorList>
    </citation>
    <scope>NUCLEOTIDE SEQUENCE [GENOMIC DNA]</scope>
    <scope>FUNCTION</scope>
    <scope>CATALYTIC ACTIVITY</scope>
    <scope>INDUCTION</scope>
    <scope>DISRUPTION PHENOTYPE</scope>
    <source>
        <strain>972 / ATCC 24843</strain>
    </source>
</reference>
<reference key="2">
    <citation type="journal article" date="2002" name="Nature">
        <title>The genome sequence of Schizosaccharomyces pombe.</title>
        <authorList>
            <person name="Wood V."/>
            <person name="Gwilliam R."/>
            <person name="Rajandream M.A."/>
            <person name="Lyne M.H."/>
            <person name="Lyne R."/>
            <person name="Stewart A."/>
            <person name="Sgouros J.G."/>
            <person name="Peat N."/>
            <person name="Hayles J."/>
            <person name="Baker S.G."/>
            <person name="Basham D."/>
            <person name="Bowman S."/>
            <person name="Brooks K."/>
            <person name="Brown D."/>
            <person name="Brown S."/>
            <person name="Chillingworth T."/>
            <person name="Churcher C.M."/>
            <person name="Collins M."/>
            <person name="Connor R."/>
            <person name="Cronin A."/>
            <person name="Davis P."/>
            <person name="Feltwell T."/>
            <person name="Fraser A."/>
            <person name="Gentles S."/>
            <person name="Goble A."/>
            <person name="Hamlin N."/>
            <person name="Harris D.E."/>
            <person name="Hidalgo J."/>
            <person name="Hodgson G."/>
            <person name="Holroyd S."/>
            <person name="Hornsby T."/>
            <person name="Howarth S."/>
            <person name="Huckle E.J."/>
            <person name="Hunt S."/>
            <person name="Jagels K."/>
            <person name="James K.D."/>
            <person name="Jones L."/>
            <person name="Jones M."/>
            <person name="Leather S."/>
            <person name="McDonald S."/>
            <person name="McLean J."/>
            <person name="Mooney P."/>
            <person name="Moule S."/>
            <person name="Mungall K.L."/>
            <person name="Murphy L.D."/>
            <person name="Niblett D."/>
            <person name="Odell C."/>
            <person name="Oliver K."/>
            <person name="O'Neil S."/>
            <person name="Pearson D."/>
            <person name="Quail M.A."/>
            <person name="Rabbinowitsch E."/>
            <person name="Rutherford K.M."/>
            <person name="Rutter S."/>
            <person name="Saunders D."/>
            <person name="Seeger K."/>
            <person name="Sharp S."/>
            <person name="Skelton J."/>
            <person name="Simmonds M.N."/>
            <person name="Squares R."/>
            <person name="Squares S."/>
            <person name="Stevens K."/>
            <person name="Taylor K."/>
            <person name="Taylor R.G."/>
            <person name="Tivey A."/>
            <person name="Walsh S.V."/>
            <person name="Warren T."/>
            <person name="Whitehead S."/>
            <person name="Woodward J.R."/>
            <person name="Volckaert G."/>
            <person name="Aert R."/>
            <person name="Robben J."/>
            <person name="Grymonprez B."/>
            <person name="Weltjens I."/>
            <person name="Vanstreels E."/>
            <person name="Rieger M."/>
            <person name="Schaefer M."/>
            <person name="Mueller-Auer S."/>
            <person name="Gabel C."/>
            <person name="Fuchs M."/>
            <person name="Duesterhoeft A."/>
            <person name="Fritzc C."/>
            <person name="Holzer E."/>
            <person name="Moestl D."/>
            <person name="Hilbert H."/>
            <person name="Borzym K."/>
            <person name="Langer I."/>
            <person name="Beck A."/>
            <person name="Lehrach H."/>
            <person name="Reinhardt R."/>
            <person name="Pohl T.M."/>
            <person name="Eger P."/>
            <person name="Zimmermann W."/>
            <person name="Wedler H."/>
            <person name="Wambutt R."/>
            <person name="Purnelle B."/>
            <person name="Goffeau A."/>
            <person name="Cadieu E."/>
            <person name="Dreano S."/>
            <person name="Gloux S."/>
            <person name="Lelaure V."/>
            <person name="Mottier S."/>
            <person name="Galibert F."/>
            <person name="Aves S.J."/>
            <person name="Xiang Z."/>
            <person name="Hunt C."/>
            <person name="Moore K."/>
            <person name="Hurst S.M."/>
            <person name="Lucas M."/>
            <person name="Rochet M."/>
            <person name="Gaillardin C."/>
            <person name="Tallada V.A."/>
            <person name="Garzon A."/>
            <person name="Thode G."/>
            <person name="Daga R.R."/>
            <person name="Cruzado L."/>
            <person name="Jimenez J."/>
            <person name="Sanchez M."/>
            <person name="del Rey F."/>
            <person name="Benito J."/>
            <person name="Dominguez A."/>
            <person name="Revuelta J.L."/>
            <person name="Moreno S."/>
            <person name="Armstrong J."/>
            <person name="Forsburg S.L."/>
            <person name="Cerutti L."/>
            <person name="Lowe T."/>
            <person name="McCombie W.R."/>
            <person name="Paulsen I."/>
            <person name="Potashkin J."/>
            <person name="Shpakovski G.V."/>
            <person name="Ussery D."/>
            <person name="Barrell B.G."/>
            <person name="Nurse P."/>
        </authorList>
    </citation>
    <scope>NUCLEOTIDE SEQUENCE [LARGE SCALE GENOMIC DNA]</scope>
    <source>
        <strain>972 / ATCC 24843</strain>
    </source>
</reference>
<reference key="3">
    <citation type="submission" date="2002-02" db="EMBL/GenBank/DDBJ databases">
        <title>Cloning and characterization of trehalose-6-phosphate phosphatase gene in Schizosaccharomyces pombe.</title>
        <authorList>
            <person name="Young-Joo J."/>
            <person name="Chan-Kyu P."/>
            <person name="Hyang-Sook Y."/>
        </authorList>
    </citation>
    <scope>NUCLEOTIDE SEQUENCE [MRNA] OF 124-817</scope>
    <source>
        <strain>972 / ATCC 24843</strain>
    </source>
</reference>
<reference key="4">
    <citation type="journal article" date="1997" name="DNA Res.">
        <title>Identification of open reading frames in Schizosaccharomyces pombe cDNAs.</title>
        <authorList>
            <person name="Yoshioka S."/>
            <person name="Kato K."/>
            <person name="Nakai K."/>
            <person name="Okayama H."/>
            <person name="Nojima H."/>
        </authorList>
    </citation>
    <scope>NUCLEOTIDE SEQUENCE [LARGE SCALE MRNA] OF 505-817</scope>
    <source>
        <strain>PR745</strain>
    </source>
</reference>
<reference key="5">
    <citation type="journal article" date="2002" name="Eur. J. Biochem.">
        <title>Molecular interaction of neutral trehalase with other enzymes of trehalose metabolism in the fission yeast Schizosaccharomyces pombe.</title>
        <authorList>
            <person name="Soto T."/>
            <person name="Franco A."/>
            <person name="Padmanabhan S."/>
            <person name="Vicente-Soler J."/>
            <person name="Cansado J."/>
            <person name="Gacto M."/>
        </authorList>
    </citation>
    <scope>IDENTIFICATION IN THE TREHALOSE SYNTHASE COMPLEX</scope>
    <scope>INTERACTION WITH NTP1 AND TPS1</scope>
</reference>
<sequence length="817" mass="93878">MSVYGKIPSTSFEHENTFELSGDLLDPEELKSLGVSGRIIYVLRHLPFKSSINEETREWDLSGRRGATTMYSSMNWLANSTYWQTTLVGWTGVIPTVSEKEENKDAVTRLDSQDVKRFEETYSQWNSGERSTEYVPVWLPGPEKGSETIINETRSQQSRWLAYAENVIRPLIHYKYWPSSEVDENEEQWWRDYVKMNHAFADKICEIYKPGDFIIVQDYSLFLVPQLIRNKIDDAVIGFYHHHPFPSSEIARCFPRRRAILRSVLGADFIGFEDYSYARHFISCCSRVLDLEIGHDWVNLNGNKVTVRAITVGIDVPRIIRSSGNVSVSEKLEELNKRYENMKVILGRDRLDELYGVPQKLRSFQRFLRTYPEWRKKVVLIQITISSAFKHPKLLSSIKKLVQAINQEFGTDDYTPVHHVEEQLEPADYFALLTRADALFINSIREGVSNLALEYVVCQRDRYGMVLLSEFTATSAMLHDVPLINPWDYNECAEIISNALSTPLERRKMIERESYKQVTTHTMQSWTSSLIRSLANKLAATKTDQRIPTLTPEHALSVYSKASKRLFMMDYDGTLTPIVRDPNAAVPSKKLLDNLATLAADPKNQVWIISGRDQQFLRNWMDDIKGLGLSAEHGSFVRKPHSTTWINLAELLDMSWKKEVRRIFQYYTDRTQGSSIEEKRCAMTWHYRKADPENGAFQALECEALLEELVCSKYDVEIMRGKANLEVRPSSINKGGIVKQILSSYPEDSLPSFIFCAGDDRTDEDMFRSLHKNTRINKETSFAVTIGSDKKLSIADWCIADPANVIDILADLANFTN</sequence>
<proteinExistence type="evidence at protein level"/>
<feature type="chain" id="PRO_0000122508" description="Trehalose-phosphatase">
    <location>
        <begin position="1"/>
        <end position="817"/>
    </location>
</feature>
<feature type="region of interest" description="Glycosyltransferase">
    <location>
        <begin position="1"/>
        <end position="547"/>
    </location>
</feature>
<feature type="sequence conflict" description="In Ref. 3." evidence="5" ref="3">
    <original>QWNSGERSTEYV</original>
    <variation>GTRNGVRSR</variation>
    <location>
        <begin position="124"/>
        <end position="135"/>
    </location>
</feature>
<feature type="sequence conflict" description="In Ref. 3; AAL77573." evidence="5" ref="3">
    <original>R</original>
    <variation>S</variation>
    <location>
        <position position="279"/>
    </location>
</feature>
<feature type="sequence conflict" description="In Ref. 3; AAL77573." evidence="5" ref="3">
    <original>E</original>
    <variation>G</variation>
    <location>
        <position position="494"/>
    </location>
</feature>
<feature type="sequence conflict" description="In Ref. 3; AAL77573." evidence="5" ref="3">
    <original>N</original>
    <variation>Y</variation>
    <location>
        <position position="498"/>
    </location>
</feature>
<feature type="sequence conflict" description="In Ref. 3; AAL77573." evidence="5" ref="3">
    <original>E</original>
    <variation>A</variation>
    <location>
        <position position="513"/>
    </location>
</feature>
<feature type="sequence conflict" description="In Ref. 3; AAL77573." evidence="5" ref="3">
    <original>N</original>
    <variation>Y</variation>
    <location>
        <position position="536"/>
    </location>
</feature>
<feature type="sequence conflict" description="In Ref. 3; AAL77573." evidence="5" ref="3">
    <original>ENGA</original>
    <variation>REWS</variation>
    <location>
        <begin position="693"/>
        <end position="696"/>
    </location>
</feature>
<dbReference type="EC" id="3.1.3.12" evidence="6"/>
<dbReference type="EMBL" id="AJ242743">
    <property type="protein sequence ID" value="CAB45142.1"/>
    <property type="molecule type" value="Genomic_DNA"/>
</dbReference>
<dbReference type="EMBL" id="CU329670">
    <property type="protein sequence ID" value="CAB10126.1"/>
    <property type="molecule type" value="Genomic_DNA"/>
</dbReference>
<dbReference type="EMBL" id="L40359">
    <property type="protein sequence ID" value="AAL77573.1"/>
    <property type="status" value="ALT_FRAME"/>
    <property type="molecule type" value="mRNA"/>
</dbReference>
<dbReference type="EMBL" id="D89225">
    <property type="protein sequence ID" value="BAA13886.1"/>
    <property type="molecule type" value="mRNA"/>
</dbReference>
<dbReference type="PIR" id="T43659">
    <property type="entry name" value="T43659"/>
</dbReference>
<dbReference type="RefSeq" id="NP_594430.1">
    <property type="nucleotide sequence ID" value="NM_001019859.2"/>
</dbReference>
<dbReference type="SMR" id="P78875"/>
<dbReference type="BioGRID" id="279033">
    <property type="interactions" value="76"/>
</dbReference>
<dbReference type="ComplexPortal" id="CPX-6423">
    <property type="entry name" value="Trehalose-6-phosphate synthase/phosphatase complex"/>
</dbReference>
<dbReference type="FunCoup" id="P78875">
    <property type="interactions" value="68"/>
</dbReference>
<dbReference type="IntAct" id="P78875">
    <property type="interactions" value="2"/>
</dbReference>
<dbReference type="STRING" id="284812.P78875"/>
<dbReference type="CAZy" id="GT20">
    <property type="family name" value="Glycosyltransferase Family 20"/>
</dbReference>
<dbReference type="iPTMnet" id="P78875"/>
<dbReference type="PaxDb" id="4896-SPAC19G12.15c.1"/>
<dbReference type="EnsemblFungi" id="SPAC19G12.15c.1">
    <property type="protein sequence ID" value="SPAC19G12.15c.1:pep"/>
    <property type="gene ID" value="SPAC19G12.15c"/>
</dbReference>
<dbReference type="GeneID" id="2542577"/>
<dbReference type="KEGG" id="spo:2542577"/>
<dbReference type="PomBase" id="SPAC19G12.15c">
    <property type="gene designation" value="tpp1"/>
</dbReference>
<dbReference type="VEuPathDB" id="FungiDB:SPAC19G12.15c"/>
<dbReference type="eggNOG" id="KOG1050">
    <property type="taxonomic scope" value="Eukaryota"/>
</dbReference>
<dbReference type="HOGENOM" id="CLU_002351_3_0_1"/>
<dbReference type="InParanoid" id="P78875"/>
<dbReference type="OMA" id="HSMARIF"/>
<dbReference type="PhylomeDB" id="P78875"/>
<dbReference type="PRO" id="PR:P78875"/>
<dbReference type="Proteomes" id="UP000002485">
    <property type="component" value="Chromosome I"/>
</dbReference>
<dbReference type="GO" id="GO:0005946">
    <property type="term" value="C:alpha,alpha-trehalose-phosphate synthase complex (UDP-forming)"/>
    <property type="evidence" value="ECO:0000314"/>
    <property type="project" value="PomBase"/>
</dbReference>
<dbReference type="GO" id="GO:0004805">
    <property type="term" value="F:trehalose-phosphatase activity"/>
    <property type="evidence" value="ECO:0000315"/>
    <property type="project" value="PomBase"/>
</dbReference>
<dbReference type="GO" id="GO:0005992">
    <property type="term" value="P:trehalose biosynthetic process"/>
    <property type="evidence" value="ECO:0000315"/>
    <property type="project" value="PomBase"/>
</dbReference>
<dbReference type="GO" id="GO:0005991">
    <property type="term" value="P:trehalose metabolic process"/>
    <property type="evidence" value="ECO:0000314"/>
    <property type="project" value="ComplexPortal"/>
</dbReference>
<dbReference type="CDD" id="cd03788">
    <property type="entry name" value="GT20_TPS"/>
    <property type="match status" value="1"/>
</dbReference>
<dbReference type="CDD" id="cd01627">
    <property type="entry name" value="HAD_TPP"/>
    <property type="match status" value="1"/>
</dbReference>
<dbReference type="FunFam" id="3.30.70.1020:FF:000001">
    <property type="entry name" value="Alpha,alpha-trehalose-phosphate synthase [UDP-forming] 1"/>
    <property type="match status" value="1"/>
</dbReference>
<dbReference type="FunFam" id="3.40.50.1000:FF:000052">
    <property type="entry name" value="Alpha,alpha-trehalose-phosphate synthase [UDP-forming] 6"/>
    <property type="match status" value="1"/>
</dbReference>
<dbReference type="Gene3D" id="3.40.50.2000">
    <property type="entry name" value="Glycogen Phosphorylase B"/>
    <property type="match status" value="2"/>
</dbReference>
<dbReference type="Gene3D" id="3.40.50.1000">
    <property type="entry name" value="HAD superfamily/HAD-like"/>
    <property type="match status" value="1"/>
</dbReference>
<dbReference type="Gene3D" id="3.30.70.1020">
    <property type="entry name" value="Trehalose-6-phosphate phosphatase related protein, domain 2"/>
    <property type="match status" value="1"/>
</dbReference>
<dbReference type="InterPro" id="IPR001830">
    <property type="entry name" value="Glyco_trans_20"/>
</dbReference>
<dbReference type="InterPro" id="IPR036412">
    <property type="entry name" value="HAD-like_sf"/>
</dbReference>
<dbReference type="InterPro" id="IPR006379">
    <property type="entry name" value="HAD-SF_hydro_IIB"/>
</dbReference>
<dbReference type="InterPro" id="IPR023214">
    <property type="entry name" value="HAD_sf"/>
</dbReference>
<dbReference type="InterPro" id="IPR003337">
    <property type="entry name" value="Trehalose_PPase"/>
</dbReference>
<dbReference type="NCBIfam" id="TIGR01484">
    <property type="entry name" value="HAD-SF-IIB"/>
    <property type="match status" value="1"/>
</dbReference>
<dbReference type="NCBIfam" id="TIGR00685">
    <property type="entry name" value="T6PP"/>
    <property type="match status" value="1"/>
</dbReference>
<dbReference type="PANTHER" id="PTHR10788">
    <property type="entry name" value="TREHALOSE-6-PHOSPHATE SYNTHASE"/>
    <property type="match status" value="1"/>
</dbReference>
<dbReference type="PANTHER" id="PTHR10788:SF121">
    <property type="entry name" value="TREHALOSE-PHOSPHATASE"/>
    <property type="match status" value="1"/>
</dbReference>
<dbReference type="Pfam" id="PF00982">
    <property type="entry name" value="Glyco_transf_20"/>
    <property type="match status" value="1"/>
</dbReference>
<dbReference type="Pfam" id="PF02358">
    <property type="entry name" value="Trehalose_PPase"/>
    <property type="match status" value="1"/>
</dbReference>
<dbReference type="SUPFAM" id="SSF56784">
    <property type="entry name" value="HAD-like"/>
    <property type="match status" value="1"/>
</dbReference>
<dbReference type="SUPFAM" id="SSF53756">
    <property type="entry name" value="UDP-Glycosyltransferase/glycogen phosphorylase"/>
    <property type="match status" value="1"/>
</dbReference>
<accession>P78875</accession>
<accession>Q8TGH5</accession>
<evidence type="ECO:0000250" key="1">
    <source>
        <dbReference type="UniProtKB" id="P31688"/>
    </source>
</evidence>
<evidence type="ECO:0000269" key="2">
    <source>
    </source>
</evidence>
<evidence type="ECO:0000269" key="3">
    <source>
    </source>
</evidence>
<evidence type="ECO:0000303" key="4">
    <source>
    </source>
</evidence>
<evidence type="ECO:0000305" key="5"/>
<evidence type="ECO:0000305" key="6">
    <source>
    </source>
</evidence>
<evidence type="ECO:0000305" key="7">
    <source>
    </source>
</evidence>
<evidence type="ECO:0000312" key="8">
    <source>
        <dbReference type="PomBase" id="SPAC19G12.15c"/>
    </source>
</evidence>
<protein>
    <recommendedName>
        <fullName>Trehalose-phosphatase</fullName>
        <ecNumber evidence="6">3.1.3.12</ecNumber>
    </recommendedName>
    <alternativeName>
        <fullName>Trehalose-6-phosphate phosphatase</fullName>
        <shortName>TPP</shortName>
    </alternativeName>
</protein>
<comment type="function">
    <text evidence="2 6">Phosphatase catalytic subunit of the trehalose synthase complex that catalyzes the production of trehalose from glucose-6-phosphate and UDP-alpha-D-glucose in a two step process (PubMed:11004189). The disaccharide trehalose serves as a storage carbohydrate that is mobilized during nutrient stress and spore germination (Probable). Together with ntp1, regulates the level of trehalose as a protectant for cell integrity during thermal, osmotic, and oxidative stress (Probable).</text>
</comment>
<comment type="catalytic activity">
    <reaction evidence="6">
        <text>alpha,alpha-trehalose 6-phosphate + H2O = alpha,alpha-trehalose + phosphate</text>
        <dbReference type="Rhea" id="RHEA:23420"/>
        <dbReference type="ChEBI" id="CHEBI:15377"/>
        <dbReference type="ChEBI" id="CHEBI:16551"/>
        <dbReference type="ChEBI" id="CHEBI:43474"/>
        <dbReference type="ChEBI" id="CHEBI:58429"/>
        <dbReference type="EC" id="3.1.3.12"/>
    </reaction>
</comment>
<comment type="cofactor">
    <cofactor evidence="1">
        <name>Mg(2+)</name>
        <dbReference type="ChEBI" id="CHEBI:18420"/>
    </cofactor>
</comment>
<comment type="pathway">
    <text evidence="5">Carbohydrate biosynthesis.</text>
</comment>
<comment type="subunit">
    <text evidence="3 7">Component of the trehalose synthase complex that contains at least tps1, ntp1, and tpp1 (Probable). Interacts with tps1 (PubMed:12153582). Interacts with ntp1 (PubMed:12153582).</text>
</comment>
<comment type="interaction">
    <interactant intactId="EBI-26616958">
        <id>P78875</id>
    </interactant>
    <interactant intactId="EBI-26616855">
        <id>O42893</id>
        <label>ntp1</label>
    </interactant>
    <organismsDiffer>false</organismsDiffer>
    <experiments>2</experiments>
</comment>
<comment type="interaction">
    <interactant intactId="EBI-26616958">
        <id>P78875</id>
    </interactant>
    <interactant intactId="EBI-26616873">
        <id>P40387</id>
        <label>tps1</label>
    </interactant>
    <organismsDiffer>false</organismsDiffer>
    <experiments>2</experiments>
</comment>
<comment type="induction">
    <text evidence="2">Induced by thermal stress, and osmotic stress (at protein level) (PubMed:11004189). Induced by oxidative stress (PubMed:11004189).</text>
</comment>
<comment type="disruption phenotype">
    <text evidence="2">Increases cellular trehalose-6-phosphate level during thermal stress.</text>
</comment>
<comment type="similarity">
    <text evidence="5">In the N-terminal section; belongs to the glycosyltransferase 20 family.</text>
</comment>
<comment type="similarity">
    <text evidence="5">In the C-terminal section; belongs to the trehalose phosphatase family.</text>
</comment>
<comment type="sequence caution" evidence="5">
    <conflict type="frameshift">
        <sequence resource="EMBL-CDS" id="AAL77573"/>
    </conflict>
</comment>
<organism>
    <name type="scientific">Schizosaccharomyces pombe (strain 972 / ATCC 24843)</name>
    <name type="common">Fission yeast</name>
    <dbReference type="NCBI Taxonomy" id="284812"/>
    <lineage>
        <taxon>Eukaryota</taxon>
        <taxon>Fungi</taxon>
        <taxon>Dikarya</taxon>
        <taxon>Ascomycota</taxon>
        <taxon>Taphrinomycotina</taxon>
        <taxon>Schizosaccharomycetes</taxon>
        <taxon>Schizosaccharomycetales</taxon>
        <taxon>Schizosaccharomycetaceae</taxon>
        <taxon>Schizosaccharomyces</taxon>
    </lineage>
</organism>
<gene>
    <name evidence="4" type="primary">tpp1</name>
    <name evidence="8" type="ORF">SPAC19G12.15c</name>
</gene>
<name>TPP1_SCHPO</name>
<keyword id="KW-0378">Hydrolase</keyword>
<keyword id="KW-1185">Reference proteome</keyword>